<proteinExistence type="inferred from homology"/>
<keyword id="KW-0227">DNA damage</keyword>
<keyword id="KW-0233">DNA recombination</keyword>
<keyword id="KW-0234">DNA repair</keyword>
<keyword id="KW-0255">Endonuclease</keyword>
<keyword id="KW-0378">Hydrolase</keyword>
<keyword id="KW-0460">Magnesium</keyword>
<keyword id="KW-0469">Meiosis</keyword>
<keyword id="KW-0479">Metal-binding</keyword>
<keyword id="KW-0540">Nuclease</keyword>
<keyword id="KW-0539">Nucleus</keyword>
<keyword id="KW-1185">Reference proteome</keyword>
<dbReference type="EC" id="3.1.22.-"/>
<dbReference type="EMBL" id="CP017628">
    <property type="protein sequence ID" value="AOW30002.1"/>
    <property type="molecule type" value="Genomic_DNA"/>
</dbReference>
<dbReference type="RefSeq" id="XP_711258.1">
    <property type="nucleotide sequence ID" value="XM_706166.1"/>
</dbReference>
<dbReference type="SMR" id="Q59NG5"/>
<dbReference type="FunCoup" id="Q59NG5">
    <property type="interactions" value="215"/>
</dbReference>
<dbReference type="STRING" id="237561.Q59NG5"/>
<dbReference type="EnsemblFungi" id="C6_00540W_A-T">
    <property type="protein sequence ID" value="C6_00540W_A-T-p1"/>
    <property type="gene ID" value="C6_00540W_A"/>
</dbReference>
<dbReference type="GeneID" id="3647146"/>
<dbReference type="KEGG" id="cal:CAALFM_C600540WA"/>
<dbReference type="CGD" id="CAL0000174024">
    <property type="gene designation" value="orf19.11682"/>
</dbReference>
<dbReference type="VEuPathDB" id="FungiDB:C6_00540W_A"/>
<dbReference type="HOGENOM" id="CLU_014329_1_0_1"/>
<dbReference type="InParanoid" id="Q59NG5"/>
<dbReference type="OrthoDB" id="5963188at2759"/>
<dbReference type="PRO" id="PR:Q59NG5"/>
<dbReference type="Proteomes" id="UP000000559">
    <property type="component" value="Chromosome 6"/>
</dbReference>
<dbReference type="GO" id="GO:0048476">
    <property type="term" value="C:Holliday junction resolvase complex"/>
    <property type="evidence" value="ECO:0000318"/>
    <property type="project" value="GO_Central"/>
</dbReference>
<dbReference type="GO" id="GO:0005634">
    <property type="term" value="C:nucleus"/>
    <property type="evidence" value="ECO:0000318"/>
    <property type="project" value="GO_Central"/>
</dbReference>
<dbReference type="GO" id="GO:0048257">
    <property type="term" value="F:3'-flap endonuclease activity"/>
    <property type="evidence" value="ECO:0000318"/>
    <property type="project" value="GO_Central"/>
</dbReference>
<dbReference type="GO" id="GO:0008821">
    <property type="term" value="F:crossover junction DNA endonuclease activity"/>
    <property type="evidence" value="ECO:0007669"/>
    <property type="project" value="EnsemblFungi"/>
</dbReference>
<dbReference type="GO" id="GO:0003677">
    <property type="term" value="F:DNA binding"/>
    <property type="evidence" value="ECO:0007669"/>
    <property type="project" value="InterPro"/>
</dbReference>
<dbReference type="GO" id="GO:0004857">
    <property type="term" value="F:enzyme inhibitor activity"/>
    <property type="evidence" value="ECO:0007669"/>
    <property type="project" value="EnsemblFungi"/>
</dbReference>
<dbReference type="GO" id="GO:0046872">
    <property type="term" value="F:metal ion binding"/>
    <property type="evidence" value="ECO:0007669"/>
    <property type="project" value="UniProtKB-KW"/>
</dbReference>
<dbReference type="GO" id="GO:0006308">
    <property type="term" value="P:DNA catabolic process"/>
    <property type="evidence" value="ECO:0007669"/>
    <property type="project" value="InterPro"/>
</dbReference>
<dbReference type="GO" id="GO:0006265">
    <property type="term" value="P:DNA topological change"/>
    <property type="evidence" value="ECO:0007669"/>
    <property type="project" value="EnsemblFungi"/>
</dbReference>
<dbReference type="GO" id="GO:0000727">
    <property type="term" value="P:double-strand break repair via break-induced replication"/>
    <property type="evidence" value="ECO:0000318"/>
    <property type="project" value="GO_Central"/>
</dbReference>
<dbReference type="GO" id="GO:0031573">
    <property type="term" value="P:mitotic intra-S DNA damage checkpoint signaling"/>
    <property type="evidence" value="ECO:0000318"/>
    <property type="project" value="GO_Central"/>
</dbReference>
<dbReference type="GO" id="GO:0000712">
    <property type="term" value="P:resolution of meiotic recombination intermediates"/>
    <property type="evidence" value="ECO:0000318"/>
    <property type="project" value="GO_Central"/>
</dbReference>
<dbReference type="CDD" id="cd21036">
    <property type="entry name" value="WH_MUS81"/>
    <property type="match status" value="1"/>
</dbReference>
<dbReference type="CDD" id="cd20074">
    <property type="entry name" value="XPF_nuclease_Mus81"/>
    <property type="match status" value="1"/>
</dbReference>
<dbReference type="FunFam" id="1.10.10.10:FF:000307">
    <property type="entry name" value="Crossover junction endonuclease MUS81"/>
    <property type="match status" value="1"/>
</dbReference>
<dbReference type="FunFam" id="3.40.50.10130:FF:000011">
    <property type="entry name" value="Crossover junction endonuclease MUS81"/>
    <property type="match status" value="1"/>
</dbReference>
<dbReference type="Gene3D" id="3.40.50.10130">
    <property type="match status" value="1"/>
</dbReference>
<dbReference type="Gene3D" id="1.10.150.670">
    <property type="entry name" value="Crossover junction endonuclease EME1, DNA-binding domain"/>
    <property type="match status" value="1"/>
</dbReference>
<dbReference type="Gene3D" id="1.10.150.110">
    <property type="entry name" value="DNA polymerase beta, N-terminal domain-like"/>
    <property type="match status" value="1"/>
</dbReference>
<dbReference type="Gene3D" id="1.10.10.10">
    <property type="entry name" value="Winged helix-like DNA-binding domain superfamily/Winged helix DNA-binding domain"/>
    <property type="match status" value="1"/>
</dbReference>
<dbReference type="InterPro" id="IPR027421">
    <property type="entry name" value="DNA_pol_lamdba_lyase_dom_sf"/>
</dbReference>
<dbReference type="InterPro" id="IPR042530">
    <property type="entry name" value="EME1/EME2_C"/>
</dbReference>
<dbReference type="InterPro" id="IPR006166">
    <property type="entry name" value="ERCC4_domain"/>
</dbReference>
<dbReference type="InterPro" id="IPR033309">
    <property type="entry name" value="Mus81"/>
</dbReference>
<dbReference type="InterPro" id="IPR011335">
    <property type="entry name" value="Restrct_endonuc-II-like"/>
</dbReference>
<dbReference type="InterPro" id="IPR036388">
    <property type="entry name" value="WH-like_DNA-bd_sf"/>
</dbReference>
<dbReference type="InterPro" id="IPR047417">
    <property type="entry name" value="WH_MUS81"/>
</dbReference>
<dbReference type="InterPro" id="IPR047416">
    <property type="entry name" value="XPF_nuclease_Mus81"/>
</dbReference>
<dbReference type="PANTHER" id="PTHR13451">
    <property type="entry name" value="CLASS II CROSSOVER JUNCTION ENDONUCLEASE MUS81"/>
    <property type="match status" value="1"/>
</dbReference>
<dbReference type="PANTHER" id="PTHR13451:SF0">
    <property type="entry name" value="CROSSOVER JUNCTION ENDONUCLEASE MUS81"/>
    <property type="match status" value="1"/>
</dbReference>
<dbReference type="Pfam" id="PF21292">
    <property type="entry name" value="EME1-MUS81_C"/>
    <property type="match status" value="1"/>
</dbReference>
<dbReference type="Pfam" id="PF02732">
    <property type="entry name" value="ERCC4"/>
    <property type="match status" value="1"/>
</dbReference>
<dbReference type="Pfam" id="PF21136">
    <property type="entry name" value="MUS81-like_WH"/>
    <property type="match status" value="1"/>
</dbReference>
<dbReference type="SMART" id="SM00891">
    <property type="entry name" value="ERCC4"/>
    <property type="match status" value="1"/>
</dbReference>
<dbReference type="SUPFAM" id="SSF47802">
    <property type="entry name" value="DNA polymerase beta, N-terminal domain-like"/>
    <property type="match status" value="1"/>
</dbReference>
<dbReference type="SUPFAM" id="SSF52980">
    <property type="entry name" value="Restriction endonuclease-like"/>
    <property type="match status" value="1"/>
</dbReference>
<feature type="chain" id="PRO_0000223641" description="Crossover junction endonuclease MUS81">
    <location>
        <begin position="1"/>
        <end position="614"/>
    </location>
</feature>
<feature type="domain" description="ERCC4">
    <location>
        <begin position="324"/>
        <end position="421"/>
    </location>
</feature>
<feature type="region of interest" description="Disordered" evidence="2">
    <location>
        <begin position="102"/>
        <end position="128"/>
    </location>
</feature>
<feature type="compositionally biased region" description="Basic residues" evidence="2">
    <location>
        <begin position="113"/>
        <end position="128"/>
    </location>
</feature>
<reference key="1">
    <citation type="journal article" date="2004" name="Proc. Natl. Acad. Sci. U.S.A.">
        <title>The diploid genome sequence of Candida albicans.</title>
        <authorList>
            <person name="Jones T."/>
            <person name="Federspiel N.A."/>
            <person name="Chibana H."/>
            <person name="Dungan J."/>
            <person name="Kalman S."/>
            <person name="Magee B.B."/>
            <person name="Newport G."/>
            <person name="Thorstenson Y.R."/>
            <person name="Agabian N."/>
            <person name="Magee P.T."/>
            <person name="Davis R.W."/>
            <person name="Scherer S."/>
        </authorList>
    </citation>
    <scope>NUCLEOTIDE SEQUENCE [LARGE SCALE GENOMIC DNA]</scope>
    <source>
        <strain>SC5314 / ATCC MYA-2876</strain>
    </source>
</reference>
<reference key="2">
    <citation type="journal article" date="2007" name="Genome Biol.">
        <title>Assembly of the Candida albicans genome into sixteen supercontigs aligned on the eight chromosomes.</title>
        <authorList>
            <person name="van het Hoog M."/>
            <person name="Rast T.J."/>
            <person name="Martchenko M."/>
            <person name="Grindle S."/>
            <person name="Dignard D."/>
            <person name="Hogues H."/>
            <person name="Cuomo C."/>
            <person name="Berriman M."/>
            <person name="Scherer S."/>
            <person name="Magee B.B."/>
            <person name="Whiteway M."/>
            <person name="Chibana H."/>
            <person name="Nantel A."/>
            <person name="Magee P.T."/>
        </authorList>
    </citation>
    <scope>GENOME REANNOTATION</scope>
    <source>
        <strain>SC5314 / ATCC MYA-2876</strain>
    </source>
</reference>
<reference key="3">
    <citation type="journal article" date="2013" name="Genome Biol.">
        <title>Assembly of a phased diploid Candida albicans genome facilitates allele-specific measurements and provides a simple model for repeat and indel structure.</title>
        <authorList>
            <person name="Muzzey D."/>
            <person name="Schwartz K."/>
            <person name="Weissman J.S."/>
            <person name="Sherlock G."/>
        </authorList>
    </citation>
    <scope>NUCLEOTIDE SEQUENCE [LARGE SCALE GENOMIC DNA]</scope>
    <scope>GENOME REANNOTATION</scope>
    <source>
        <strain>SC5314 / ATCC MYA-2876</strain>
    </source>
</reference>
<protein>
    <recommendedName>
        <fullName>Crossover junction endonuclease MUS81</fullName>
        <ecNumber>3.1.22.-</ecNumber>
    </recommendedName>
</protein>
<gene>
    <name type="primary">MUS81</name>
    <name type="ordered locus">CAALFM_C600540WA</name>
    <name type="ORF">CaO19.11682</name>
    <name type="ORF">CaO19.4206</name>
</gene>
<sequence length="614" mass="70663">MSVVNDDFKPLLIQWVEEEAINATKRGSKMVDLYNKILFQLRGYELPICDLKTLKSIKYVGDKTANQLRKKIAKHCKENELTLPRGFMDVAEKHRLDLEESNLTSSTSTIKTTNKRAKTSSKSKPKYVPKHRSGGFAILIALYLYDKDRNGMTKERIIAGATPYCDRSFSNNAASKEFYSAWSSAKTLENHNLISTTGRSPKIYFLTDEGVSLAQQLKTAIGLSSPPEGSKKNDRNMIMEQSFDNGIRLDTSFELSSPAGRAMLSSSPIRRISNPVHSNRAIQKMLEKELRNGETPPSSQHDAGNRIYDGIKYEVWRKEDYEVIVYMDNREIRSRADRDHFQTRLQTLGVKCEVKPLSSGDVLWVGRNTSTGTEAVLNYLCERKRLDDLCDSIKDGRFQEQKNRMKKTGIKHCYYLVEDMVSYQDKVYDLMDSIQSSLTQTMTTARLYLRRFKDIDETTAFIASNTKVIENLKSNLIVIKPQDIKNQQDYLNILLKFRNKFEKTQPHQDNPDYECVQLFSRFQDMLGKTNQMTVKEMFILMLMTIRGVSLEKAVVIQNRFPTPKSLLEYYHTEHATTDTNIKRDLMMNEFKDQIGNKKIGKALSEKIYNVWGKP</sequence>
<comment type="function">
    <text evidence="1">Interacts with EME1 to form a DNA structure-specific endonuclease with substrate preference for branched DNA structures with a 5'-end at the branch nick. Typical substrates include 3'-flap structures, D-loops, replication forks and nicked Holliday junctions. May be required in mitosis for the processing of stalled or collapsed replication fork intermediates. May be required in meiosis for the repair of meiosis-specific double strand breaks subsequent to single-end invasion (SEI) (By similarity).</text>
</comment>
<comment type="cofactor">
    <cofactor evidence="1">
        <name>Mg(2+)</name>
        <dbReference type="ChEBI" id="CHEBI:18420"/>
    </cofactor>
</comment>
<comment type="subunit">
    <text evidence="1">Interacts with EME1.</text>
</comment>
<comment type="subcellular location">
    <subcellularLocation>
        <location evidence="1">Nucleus</location>
    </subcellularLocation>
</comment>
<comment type="similarity">
    <text evidence="3">Belongs to the XPF family.</text>
</comment>
<name>MUS81_CANAL</name>
<accession>Q59NG5</accession>
<accession>A0A1D8PPF2</accession>
<evidence type="ECO:0000250" key="1"/>
<evidence type="ECO:0000256" key="2">
    <source>
        <dbReference type="SAM" id="MobiDB-lite"/>
    </source>
</evidence>
<evidence type="ECO:0000305" key="3"/>
<organism>
    <name type="scientific">Candida albicans (strain SC5314 / ATCC MYA-2876)</name>
    <name type="common">Yeast</name>
    <dbReference type="NCBI Taxonomy" id="237561"/>
    <lineage>
        <taxon>Eukaryota</taxon>
        <taxon>Fungi</taxon>
        <taxon>Dikarya</taxon>
        <taxon>Ascomycota</taxon>
        <taxon>Saccharomycotina</taxon>
        <taxon>Pichiomycetes</taxon>
        <taxon>Debaryomycetaceae</taxon>
        <taxon>Candida/Lodderomyces clade</taxon>
        <taxon>Candida</taxon>
    </lineage>
</organism>